<reference key="1">
    <citation type="journal article" date="2005" name="Nature">
        <title>Genome sequencing and analysis of Aspergillus oryzae.</title>
        <authorList>
            <person name="Machida M."/>
            <person name="Asai K."/>
            <person name="Sano M."/>
            <person name="Tanaka T."/>
            <person name="Kumagai T."/>
            <person name="Terai G."/>
            <person name="Kusumoto K."/>
            <person name="Arima T."/>
            <person name="Akita O."/>
            <person name="Kashiwagi Y."/>
            <person name="Abe K."/>
            <person name="Gomi K."/>
            <person name="Horiuchi H."/>
            <person name="Kitamoto K."/>
            <person name="Kobayashi T."/>
            <person name="Takeuchi M."/>
            <person name="Denning D.W."/>
            <person name="Galagan J.E."/>
            <person name="Nierman W.C."/>
            <person name="Yu J."/>
            <person name="Archer D.B."/>
            <person name="Bennett J.W."/>
            <person name="Bhatnagar D."/>
            <person name="Cleveland T.E."/>
            <person name="Fedorova N.D."/>
            <person name="Gotoh O."/>
            <person name="Horikawa H."/>
            <person name="Hosoyama A."/>
            <person name="Ichinomiya M."/>
            <person name="Igarashi R."/>
            <person name="Iwashita K."/>
            <person name="Juvvadi P.R."/>
            <person name="Kato M."/>
            <person name="Kato Y."/>
            <person name="Kin T."/>
            <person name="Kokubun A."/>
            <person name="Maeda H."/>
            <person name="Maeyama N."/>
            <person name="Maruyama J."/>
            <person name="Nagasaki H."/>
            <person name="Nakajima T."/>
            <person name="Oda K."/>
            <person name="Okada K."/>
            <person name="Paulsen I."/>
            <person name="Sakamoto K."/>
            <person name="Sawano T."/>
            <person name="Takahashi M."/>
            <person name="Takase K."/>
            <person name="Terabayashi Y."/>
            <person name="Wortman J.R."/>
            <person name="Yamada O."/>
            <person name="Yamagata Y."/>
            <person name="Anazawa H."/>
            <person name="Hata Y."/>
            <person name="Koide Y."/>
            <person name="Komori T."/>
            <person name="Koyama Y."/>
            <person name="Minetoki T."/>
            <person name="Suharnan S."/>
            <person name="Tanaka A."/>
            <person name="Isono K."/>
            <person name="Kuhara S."/>
            <person name="Ogasawara N."/>
            <person name="Kikuchi H."/>
        </authorList>
    </citation>
    <scope>NUCLEOTIDE SEQUENCE [LARGE SCALE GENOMIC DNA]</scope>
    <source>
        <strain>ATCC 42149 / RIB 40</strain>
    </source>
</reference>
<reference key="2">
    <citation type="journal article" date="2016" name="Sci. Rep.">
        <title>Identification of a novel sesquiterpene biosynthetic machinery involved in astellolide biosynthesis.</title>
        <authorList>
            <person name="Shinohara Y."/>
            <person name="Takahashi S."/>
            <person name="Osada H."/>
            <person name="Koyama Y."/>
        </authorList>
    </citation>
    <scope>INDUCTION</scope>
    <scope>FUNCTION</scope>
    <scope>CATALYTIC ACTIVITY</scope>
    <scope>PATHWAY</scope>
</reference>
<sequence>MTKINPYKGILVELKDIVFTSSSDQIKLPINTFKSILCCGATAQYQCGKINRAQYYSRLARDFALSLADVTALFDTVQATIRPEESFLAFLAELKSRFGEQLKLYAVANMSREDYAMLKSLPIDWSLFDGVFLSADLGMRKPELRFFRHVLESISMKPEDTILVDNDTDNILCALSMGLKGILFGSTSVPQALTNLLEYDHISRAEQFLRSHAKSLHSVTHTGVTIRENFAQLLILEATGDIDLVELEYHPTTWNYFIGTQSSQLLLHKHNADRMTTMTSCWLVSAFLVVS</sequence>
<evidence type="ECO:0000269" key="1">
    <source>
    </source>
</evidence>
<evidence type="ECO:0000303" key="2">
    <source>
    </source>
</evidence>
<evidence type="ECO:0000305" key="3"/>
<protein>
    <recommendedName>
        <fullName evidence="2">Sesquiterpene cyclase astC</fullName>
        <ecNumber evidence="1">4.2.3.-</ecNumber>
    </recommendedName>
    <alternativeName>
        <fullName evidence="2">Astellolide biosynthesis cluster protein C</fullName>
    </alternativeName>
</protein>
<proteinExistence type="evidence at protein level"/>
<feature type="chain" id="PRO_0000450118" description="Sesquiterpene cyclase astC">
    <location>
        <begin position="1"/>
        <end position="291"/>
    </location>
</feature>
<gene>
    <name evidence="2" type="primary">astC</name>
    <name type="ORF">AO090026000582</name>
</gene>
<keyword id="KW-0456">Lyase</keyword>
<keyword id="KW-1185">Reference proteome</keyword>
<accession>Q2UEK4</accession>
<comment type="function">
    <text evidence="1">Sesquiterpene cyclase; part of the gene cluster that mediates the biosynthesis of astellolides, drimane-type sesquiterpene esters that show antimicrobial, anti-inflammatory, and anti-tumor activities (PubMed:27628599). The first step in astellolide biosynthesis is performed by the sesquiterpene cyclase astC that catalyzes the formation of drimanyl pyrophosphate from farnesyl pyrophosphate (PubMed:27628599). Drimanyl pyrophosphate is then dephosphorylated by the sesquiterpene phosphatase astI to produce drimanyl monophosphate which is further dephosphorylated to drim-8-ene-11-ol by atsK (PubMed:27628599). Drim-8-ene-11-ol is converted to confertifolin, probably by the cytochrome P450 monooxygenase astD and/or the dehydrogenase astE (PubMed:27628599). The cytochrome P450 monooxygenases astB, astF and astJ then hydroxylate confertifolin at C6, C14, or C15 to form trihydroxy confertifolin (PubMed:27628599). The nonribosomal peptide synthetase astA catalyzes ester bond formation between trihydroxy contifolin and benzoic acid (BA) or 4-hydroxy benzoic acid (4HBA), leading to the formation of dideacetyl astellolides A and B, respectively (PubMed:27628599). Finally, the O-acetyltransferase astG converts dideacetyl astellolides A and B into deacetyl astellolides A and B (PubMed:27628599).</text>
</comment>
<comment type="catalytic activity">
    <reaction evidence="1">
        <text>(2E,6E)-farnesyl diphosphate = (S,S)-drim-8-en-11-yl diphosphate</text>
        <dbReference type="Rhea" id="RHEA:80979"/>
        <dbReference type="ChEBI" id="CHEBI:175763"/>
        <dbReference type="ChEBI" id="CHEBI:231796"/>
    </reaction>
    <physiologicalReaction direction="left-to-right" evidence="1">
        <dbReference type="Rhea" id="RHEA:80980"/>
    </physiologicalReaction>
</comment>
<comment type="pathway">
    <text evidence="1">Secondary metabolite biosynthesis; terpenoid biosynthesis.</text>
</comment>
<comment type="induction">
    <text evidence="1">Expression is regulated by the secondary metabolite regulator cclA.</text>
</comment>
<comment type="similarity">
    <text evidence="3">Belongs to the HAD-like hydrolase superfamily.</text>
</comment>
<name>ASTC_ASPOR</name>
<organism>
    <name type="scientific">Aspergillus oryzae (strain ATCC 42149 / RIB 40)</name>
    <name type="common">Yellow koji mold</name>
    <dbReference type="NCBI Taxonomy" id="510516"/>
    <lineage>
        <taxon>Eukaryota</taxon>
        <taxon>Fungi</taxon>
        <taxon>Dikarya</taxon>
        <taxon>Ascomycota</taxon>
        <taxon>Pezizomycotina</taxon>
        <taxon>Eurotiomycetes</taxon>
        <taxon>Eurotiomycetidae</taxon>
        <taxon>Eurotiales</taxon>
        <taxon>Aspergillaceae</taxon>
        <taxon>Aspergillus</taxon>
        <taxon>Aspergillus subgen. Circumdati</taxon>
    </lineage>
</organism>
<dbReference type="EC" id="4.2.3.-" evidence="1"/>
<dbReference type="EMBL" id="BA000051">
    <property type="protein sequence ID" value="BAE60011.1"/>
    <property type="molecule type" value="Genomic_DNA"/>
</dbReference>
<dbReference type="SMR" id="Q2UEK4"/>
<dbReference type="STRING" id="510516.Q2UEK4"/>
<dbReference type="EnsemblFungi" id="BAE60011">
    <property type="protein sequence ID" value="BAE60011"/>
    <property type="gene ID" value="AO090026000582"/>
</dbReference>
<dbReference type="HOGENOM" id="CLU_045011_9_2_1"/>
<dbReference type="OMA" id="CSQGLHG"/>
<dbReference type="UniPathway" id="UPA00213"/>
<dbReference type="Proteomes" id="UP000006564">
    <property type="component" value="Chromosome 3"/>
</dbReference>
<dbReference type="GO" id="GO:0016829">
    <property type="term" value="F:lyase activity"/>
    <property type="evidence" value="ECO:0007669"/>
    <property type="project" value="UniProtKB-KW"/>
</dbReference>
<dbReference type="GO" id="GO:0016114">
    <property type="term" value="P:terpenoid biosynthetic process"/>
    <property type="evidence" value="ECO:0007669"/>
    <property type="project" value="UniProtKB-UniPathway"/>
</dbReference>
<dbReference type="Gene3D" id="3.40.50.1000">
    <property type="entry name" value="HAD superfamily/HAD-like"/>
    <property type="match status" value="1"/>
</dbReference>
<dbReference type="Gene3D" id="1.10.150.240">
    <property type="entry name" value="Putative phosphatase, domain 2"/>
    <property type="match status" value="1"/>
</dbReference>
<dbReference type="InterPro" id="IPR036412">
    <property type="entry name" value="HAD-like_sf"/>
</dbReference>
<dbReference type="InterPro" id="IPR023214">
    <property type="entry name" value="HAD_sf"/>
</dbReference>
<dbReference type="InterPro" id="IPR023198">
    <property type="entry name" value="PGP-like_dom2"/>
</dbReference>
<dbReference type="PANTHER" id="PTHR43611">
    <property type="entry name" value="ALPHA-D-GLUCOSE 1-PHOSPHATE PHOSPHATASE"/>
    <property type="match status" value="1"/>
</dbReference>
<dbReference type="PANTHER" id="PTHR43611:SF3">
    <property type="entry name" value="FLAVIN MONONUCLEOTIDE HYDROLASE 1, CHLOROPLATIC"/>
    <property type="match status" value="1"/>
</dbReference>
<dbReference type="SUPFAM" id="SSF56784">
    <property type="entry name" value="HAD-like"/>
    <property type="match status" value="1"/>
</dbReference>